<feature type="chain" id="PRO_1000148047" description="Flagellar hook-basal body complex protein FliE">
    <location>
        <begin position="1"/>
        <end position="114"/>
    </location>
</feature>
<comment type="subcellular location">
    <subcellularLocation>
        <location evidence="1">Bacterial flagellum basal body</location>
    </subcellularLocation>
</comment>
<comment type="similarity">
    <text evidence="1">Belongs to the FliE family.</text>
</comment>
<sequence length="114" mass="12243">MAFNPIAPVHPLMLQQNLNPIQENNPVEGSGPQTPAGAAKVGADFGQFLQEALQKVDNLQKEADVASLGLATGQIQDLHTAVIAMEKAGLSLSLTVDVRNRALDAYHEIMRMQI</sequence>
<name>FLIE_DESHD</name>
<dbReference type="EMBL" id="CP001336">
    <property type="protein sequence ID" value="ACL22159.1"/>
    <property type="molecule type" value="Genomic_DNA"/>
</dbReference>
<dbReference type="RefSeq" id="WP_005816234.1">
    <property type="nucleotide sequence ID" value="NC_011830.1"/>
</dbReference>
<dbReference type="SMR" id="B8FTR7"/>
<dbReference type="KEGG" id="dhd:Dhaf_4151"/>
<dbReference type="HOGENOM" id="CLU_147249_3_0_9"/>
<dbReference type="Proteomes" id="UP000007726">
    <property type="component" value="Chromosome"/>
</dbReference>
<dbReference type="GO" id="GO:0009425">
    <property type="term" value="C:bacterial-type flagellum basal body"/>
    <property type="evidence" value="ECO:0007669"/>
    <property type="project" value="UniProtKB-SubCell"/>
</dbReference>
<dbReference type="GO" id="GO:0003774">
    <property type="term" value="F:cytoskeletal motor activity"/>
    <property type="evidence" value="ECO:0007669"/>
    <property type="project" value="InterPro"/>
</dbReference>
<dbReference type="GO" id="GO:0005198">
    <property type="term" value="F:structural molecule activity"/>
    <property type="evidence" value="ECO:0007669"/>
    <property type="project" value="InterPro"/>
</dbReference>
<dbReference type="GO" id="GO:0071973">
    <property type="term" value="P:bacterial-type flagellum-dependent cell motility"/>
    <property type="evidence" value="ECO:0007669"/>
    <property type="project" value="InterPro"/>
</dbReference>
<dbReference type="HAMAP" id="MF_00724">
    <property type="entry name" value="FliE"/>
    <property type="match status" value="1"/>
</dbReference>
<dbReference type="InterPro" id="IPR001624">
    <property type="entry name" value="FliE"/>
</dbReference>
<dbReference type="NCBIfam" id="TIGR00205">
    <property type="entry name" value="fliE"/>
    <property type="match status" value="1"/>
</dbReference>
<dbReference type="PANTHER" id="PTHR34653">
    <property type="match status" value="1"/>
</dbReference>
<dbReference type="PANTHER" id="PTHR34653:SF1">
    <property type="entry name" value="FLAGELLAR HOOK-BASAL BODY COMPLEX PROTEIN FLIE"/>
    <property type="match status" value="1"/>
</dbReference>
<dbReference type="Pfam" id="PF02049">
    <property type="entry name" value="FliE"/>
    <property type="match status" value="1"/>
</dbReference>
<dbReference type="PRINTS" id="PR01006">
    <property type="entry name" value="FLGHOOKFLIE"/>
</dbReference>
<keyword id="KW-0975">Bacterial flagellum</keyword>
<organism>
    <name type="scientific">Desulfitobacterium hafniense (strain DSM 10664 / DCB-2)</name>
    <dbReference type="NCBI Taxonomy" id="272564"/>
    <lineage>
        <taxon>Bacteria</taxon>
        <taxon>Bacillati</taxon>
        <taxon>Bacillota</taxon>
        <taxon>Clostridia</taxon>
        <taxon>Eubacteriales</taxon>
        <taxon>Desulfitobacteriaceae</taxon>
        <taxon>Desulfitobacterium</taxon>
    </lineage>
</organism>
<accession>B8FTR7</accession>
<evidence type="ECO:0000255" key="1">
    <source>
        <dbReference type="HAMAP-Rule" id="MF_00724"/>
    </source>
</evidence>
<protein>
    <recommendedName>
        <fullName evidence="1">Flagellar hook-basal body complex protein FliE</fullName>
    </recommendedName>
</protein>
<proteinExistence type="inferred from homology"/>
<reference key="1">
    <citation type="journal article" date="2012" name="BMC Microbiol.">
        <title>Genome sequence of Desulfitobacterium hafniense DCB-2, a Gram-positive anaerobe capable of dehalogenation and metal reduction.</title>
        <authorList>
            <person name="Kim S.H."/>
            <person name="Harzman C."/>
            <person name="Davis J.K."/>
            <person name="Hutcheson R."/>
            <person name="Broderick J.B."/>
            <person name="Marsh T.L."/>
            <person name="Tiedje J.M."/>
        </authorList>
    </citation>
    <scope>NUCLEOTIDE SEQUENCE [LARGE SCALE GENOMIC DNA]</scope>
    <source>
        <strain>DSM 10664 / DCB-2</strain>
    </source>
</reference>
<gene>
    <name evidence="1" type="primary">fliE</name>
    <name type="ordered locus">Dhaf_4151</name>
</gene>